<accession>Q3K5X9</accession>
<sequence>MAINLEDKKAIVAEVNEAAKVALSAVVVDARGVTVGAMTGLRKEAREAGVYVRVVRNTLLKRAVAGTSYEVLNDAFTGPTLIAFSNEHPGAAARLFKEFAKGQDKFEIKAASFEGKFLAANEIDVLASLPTRDEAIAKLMSVIQGATSKLARTLAAIRDQKEAAAA</sequence>
<reference key="1">
    <citation type="journal article" date="2009" name="Genome Biol.">
        <title>Genomic and genetic analyses of diversity and plant interactions of Pseudomonas fluorescens.</title>
        <authorList>
            <person name="Silby M.W."/>
            <person name="Cerdeno-Tarraga A.M."/>
            <person name="Vernikos G.S."/>
            <person name="Giddens S.R."/>
            <person name="Jackson R.W."/>
            <person name="Preston G.M."/>
            <person name="Zhang X.-X."/>
            <person name="Moon C.D."/>
            <person name="Gehrig S.M."/>
            <person name="Godfrey S.A.C."/>
            <person name="Knight C.G."/>
            <person name="Malone J.G."/>
            <person name="Robinson Z."/>
            <person name="Spiers A.J."/>
            <person name="Harris S."/>
            <person name="Challis G.L."/>
            <person name="Yaxley A.M."/>
            <person name="Harris D."/>
            <person name="Seeger K."/>
            <person name="Murphy L."/>
            <person name="Rutter S."/>
            <person name="Squares R."/>
            <person name="Quail M.A."/>
            <person name="Saunders E."/>
            <person name="Mavromatis K."/>
            <person name="Brettin T.S."/>
            <person name="Bentley S.D."/>
            <person name="Hothersall J."/>
            <person name="Stephens E."/>
            <person name="Thomas C.M."/>
            <person name="Parkhill J."/>
            <person name="Levy S.B."/>
            <person name="Rainey P.B."/>
            <person name="Thomson N.R."/>
        </authorList>
    </citation>
    <scope>NUCLEOTIDE SEQUENCE [LARGE SCALE GENOMIC DNA]</scope>
    <source>
        <strain>Pf0-1</strain>
    </source>
</reference>
<protein>
    <recommendedName>
        <fullName evidence="1">Large ribosomal subunit protein uL10</fullName>
    </recommendedName>
    <alternativeName>
        <fullName evidence="2">50S ribosomal protein L10</fullName>
    </alternativeName>
</protein>
<feature type="chain" id="PRO_0000234874" description="Large ribosomal subunit protein uL10">
    <location>
        <begin position="1"/>
        <end position="166"/>
    </location>
</feature>
<evidence type="ECO:0000255" key="1">
    <source>
        <dbReference type="HAMAP-Rule" id="MF_00362"/>
    </source>
</evidence>
<evidence type="ECO:0000305" key="2"/>
<organism>
    <name type="scientific">Pseudomonas fluorescens (strain Pf0-1)</name>
    <dbReference type="NCBI Taxonomy" id="205922"/>
    <lineage>
        <taxon>Bacteria</taxon>
        <taxon>Pseudomonadati</taxon>
        <taxon>Pseudomonadota</taxon>
        <taxon>Gammaproteobacteria</taxon>
        <taxon>Pseudomonadales</taxon>
        <taxon>Pseudomonadaceae</taxon>
        <taxon>Pseudomonas</taxon>
    </lineage>
</organism>
<comment type="function">
    <text evidence="1">Forms part of the ribosomal stalk, playing a central role in the interaction of the ribosome with GTP-bound translation factors.</text>
</comment>
<comment type="subunit">
    <text evidence="1">Part of the ribosomal stalk of the 50S ribosomal subunit. The N-terminus interacts with L11 and the large rRNA to form the base of the stalk. The C-terminus forms an elongated spine to which L12 dimers bind in a sequential fashion forming a multimeric L10(L12)X complex.</text>
</comment>
<comment type="similarity">
    <text evidence="1">Belongs to the universal ribosomal protein uL10 family.</text>
</comment>
<keyword id="KW-0687">Ribonucleoprotein</keyword>
<keyword id="KW-0689">Ribosomal protein</keyword>
<keyword id="KW-0694">RNA-binding</keyword>
<keyword id="KW-0699">rRNA-binding</keyword>
<dbReference type="EMBL" id="CP000094">
    <property type="protein sequence ID" value="ABA76825.1"/>
    <property type="molecule type" value="Genomic_DNA"/>
</dbReference>
<dbReference type="RefSeq" id="WP_011336174.1">
    <property type="nucleotide sequence ID" value="NC_007492.2"/>
</dbReference>
<dbReference type="KEGG" id="pfo:Pfl01_5088"/>
<dbReference type="eggNOG" id="COG0244">
    <property type="taxonomic scope" value="Bacteria"/>
</dbReference>
<dbReference type="HOGENOM" id="CLU_092227_0_2_6"/>
<dbReference type="Proteomes" id="UP000002704">
    <property type="component" value="Chromosome"/>
</dbReference>
<dbReference type="GO" id="GO:0015934">
    <property type="term" value="C:large ribosomal subunit"/>
    <property type="evidence" value="ECO:0007669"/>
    <property type="project" value="InterPro"/>
</dbReference>
<dbReference type="GO" id="GO:0070180">
    <property type="term" value="F:large ribosomal subunit rRNA binding"/>
    <property type="evidence" value="ECO:0007669"/>
    <property type="project" value="UniProtKB-UniRule"/>
</dbReference>
<dbReference type="GO" id="GO:0003735">
    <property type="term" value="F:structural constituent of ribosome"/>
    <property type="evidence" value="ECO:0007669"/>
    <property type="project" value="InterPro"/>
</dbReference>
<dbReference type="GO" id="GO:0006412">
    <property type="term" value="P:translation"/>
    <property type="evidence" value="ECO:0007669"/>
    <property type="project" value="UniProtKB-UniRule"/>
</dbReference>
<dbReference type="CDD" id="cd05797">
    <property type="entry name" value="Ribosomal_L10"/>
    <property type="match status" value="1"/>
</dbReference>
<dbReference type="FunFam" id="3.30.70.1730:FF:000001">
    <property type="entry name" value="50S ribosomal protein L10"/>
    <property type="match status" value="1"/>
</dbReference>
<dbReference type="Gene3D" id="3.30.70.1730">
    <property type="match status" value="1"/>
</dbReference>
<dbReference type="Gene3D" id="6.10.250.2350">
    <property type="match status" value="1"/>
</dbReference>
<dbReference type="HAMAP" id="MF_00362">
    <property type="entry name" value="Ribosomal_uL10"/>
    <property type="match status" value="1"/>
</dbReference>
<dbReference type="InterPro" id="IPR001790">
    <property type="entry name" value="Ribosomal_uL10"/>
</dbReference>
<dbReference type="InterPro" id="IPR043141">
    <property type="entry name" value="Ribosomal_uL10-like_sf"/>
</dbReference>
<dbReference type="InterPro" id="IPR022973">
    <property type="entry name" value="Ribosomal_uL10_bac"/>
</dbReference>
<dbReference type="InterPro" id="IPR047865">
    <property type="entry name" value="Ribosomal_uL10_bac_type"/>
</dbReference>
<dbReference type="InterPro" id="IPR002363">
    <property type="entry name" value="Ribosomal_uL10_CS_bac"/>
</dbReference>
<dbReference type="NCBIfam" id="NF000955">
    <property type="entry name" value="PRK00099.1-1"/>
    <property type="match status" value="1"/>
</dbReference>
<dbReference type="PANTHER" id="PTHR11560">
    <property type="entry name" value="39S RIBOSOMAL PROTEIN L10, MITOCHONDRIAL"/>
    <property type="match status" value="1"/>
</dbReference>
<dbReference type="Pfam" id="PF00466">
    <property type="entry name" value="Ribosomal_L10"/>
    <property type="match status" value="1"/>
</dbReference>
<dbReference type="SUPFAM" id="SSF160369">
    <property type="entry name" value="Ribosomal protein L10-like"/>
    <property type="match status" value="1"/>
</dbReference>
<dbReference type="PROSITE" id="PS01109">
    <property type="entry name" value="RIBOSOMAL_L10"/>
    <property type="match status" value="1"/>
</dbReference>
<proteinExistence type="inferred from homology"/>
<gene>
    <name evidence="1" type="primary">rplJ</name>
    <name type="ordered locus">Pfl01_5088</name>
</gene>
<name>RL10_PSEPF</name>